<evidence type="ECO:0000250" key="1"/>
<evidence type="ECO:0000255" key="2">
    <source>
        <dbReference type="HAMAP-Rule" id="MF_00047"/>
    </source>
</evidence>
<name>DDL_CLOAB</name>
<gene>
    <name evidence="2" type="primary">ddl</name>
    <name type="ordered locus">CA_C2895</name>
</gene>
<sequence>MKKKVAILFGGQSTEHEVSRVSAASVLRNIDTSKYDLFPIGITKKGEWFEYTGSADKIENGEWEKDEFYKSPNGQAILFNKEVDVVFPVMHGLYGEDGTIQGLCKLVGVPCVGPSVLSSSVCMDKVYTKYVLEHFNIKQADYVVVHAHEYKTSKEEIIKEIENKLGYAVFIKPSNSGSSVGITKAHNRKELEAGLEEAMKYDRKILVEEALNAREIEVAVLGNEEPKAAIPGEIVPAKEFYDYEAKYENAASKLLIPANLSNENLEKIKNIAIEVYKALDCSGMSRVDFLVDKDTTEMYLNEVNTIPGFTSISMYPKLWAAAGKDYSKLIDELIELAASRNNA</sequence>
<feature type="chain" id="PRO_0000177804" description="D-alanine--D-alanine ligase">
    <location>
        <begin position="1"/>
        <end position="343"/>
    </location>
</feature>
<feature type="domain" description="ATP-grasp" evidence="2">
    <location>
        <begin position="129"/>
        <end position="335"/>
    </location>
</feature>
<feature type="binding site" evidence="2">
    <location>
        <begin position="162"/>
        <end position="217"/>
    </location>
    <ligand>
        <name>ATP</name>
        <dbReference type="ChEBI" id="CHEBI:30616"/>
    </ligand>
</feature>
<feature type="binding site" evidence="2">
    <location>
        <position position="288"/>
    </location>
    <ligand>
        <name>Mg(2+)</name>
        <dbReference type="ChEBI" id="CHEBI:18420"/>
        <label>1</label>
    </ligand>
</feature>
<feature type="binding site" evidence="2">
    <location>
        <position position="302"/>
    </location>
    <ligand>
        <name>Mg(2+)</name>
        <dbReference type="ChEBI" id="CHEBI:18420"/>
        <label>1</label>
    </ligand>
</feature>
<feature type="binding site" evidence="2">
    <location>
        <position position="302"/>
    </location>
    <ligand>
        <name>Mg(2+)</name>
        <dbReference type="ChEBI" id="CHEBI:18420"/>
        <label>2</label>
    </ligand>
</feature>
<feature type="binding site" evidence="2">
    <location>
        <position position="304"/>
    </location>
    <ligand>
        <name>Mg(2+)</name>
        <dbReference type="ChEBI" id="CHEBI:18420"/>
        <label>2</label>
    </ligand>
</feature>
<keyword id="KW-0067">ATP-binding</keyword>
<keyword id="KW-0133">Cell shape</keyword>
<keyword id="KW-0961">Cell wall biogenesis/degradation</keyword>
<keyword id="KW-0963">Cytoplasm</keyword>
<keyword id="KW-0436">Ligase</keyword>
<keyword id="KW-0460">Magnesium</keyword>
<keyword id="KW-0464">Manganese</keyword>
<keyword id="KW-0479">Metal-binding</keyword>
<keyword id="KW-0547">Nucleotide-binding</keyword>
<keyword id="KW-0573">Peptidoglycan synthesis</keyword>
<keyword id="KW-1185">Reference proteome</keyword>
<organism>
    <name type="scientific">Clostridium acetobutylicum (strain ATCC 824 / DSM 792 / JCM 1419 / IAM 19013 / LMG 5710 / NBRC 13948 / NRRL B-527 / VKM B-1787 / 2291 / W)</name>
    <dbReference type="NCBI Taxonomy" id="272562"/>
    <lineage>
        <taxon>Bacteria</taxon>
        <taxon>Bacillati</taxon>
        <taxon>Bacillota</taxon>
        <taxon>Clostridia</taxon>
        <taxon>Eubacteriales</taxon>
        <taxon>Clostridiaceae</taxon>
        <taxon>Clostridium</taxon>
    </lineage>
</organism>
<dbReference type="EC" id="6.3.2.4" evidence="2"/>
<dbReference type="EMBL" id="AE001437">
    <property type="protein sequence ID" value="AAK80837.1"/>
    <property type="molecule type" value="Genomic_DNA"/>
</dbReference>
<dbReference type="PIR" id="B97256">
    <property type="entry name" value="B97256"/>
</dbReference>
<dbReference type="RefSeq" id="NP_349497.1">
    <property type="nucleotide sequence ID" value="NC_003030.1"/>
</dbReference>
<dbReference type="RefSeq" id="WP_010966178.1">
    <property type="nucleotide sequence ID" value="NC_003030.1"/>
</dbReference>
<dbReference type="SMR" id="Q97F58"/>
<dbReference type="STRING" id="272562.CA_C2895"/>
<dbReference type="KEGG" id="cac:CA_C2895"/>
<dbReference type="PATRIC" id="fig|272562.8.peg.3079"/>
<dbReference type="eggNOG" id="COG1181">
    <property type="taxonomic scope" value="Bacteria"/>
</dbReference>
<dbReference type="HOGENOM" id="CLU_039268_0_0_9"/>
<dbReference type="OrthoDB" id="9813261at2"/>
<dbReference type="UniPathway" id="UPA00219"/>
<dbReference type="Proteomes" id="UP000000814">
    <property type="component" value="Chromosome"/>
</dbReference>
<dbReference type="GO" id="GO:0005829">
    <property type="term" value="C:cytosol"/>
    <property type="evidence" value="ECO:0007669"/>
    <property type="project" value="TreeGrafter"/>
</dbReference>
<dbReference type="GO" id="GO:0005524">
    <property type="term" value="F:ATP binding"/>
    <property type="evidence" value="ECO:0007669"/>
    <property type="project" value="UniProtKB-KW"/>
</dbReference>
<dbReference type="GO" id="GO:0008716">
    <property type="term" value="F:D-alanine-D-alanine ligase activity"/>
    <property type="evidence" value="ECO:0007669"/>
    <property type="project" value="UniProtKB-UniRule"/>
</dbReference>
<dbReference type="GO" id="GO:0046872">
    <property type="term" value="F:metal ion binding"/>
    <property type="evidence" value="ECO:0007669"/>
    <property type="project" value="UniProtKB-KW"/>
</dbReference>
<dbReference type="GO" id="GO:0071555">
    <property type="term" value="P:cell wall organization"/>
    <property type="evidence" value="ECO:0007669"/>
    <property type="project" value="UniProtKB-KW"/>
</dbReference>
<dbReference type="GO" id="GO:0009252">
    <property type="term" value="P:peptidoglycan biosynthetic process"/>
    <property type="evidence" value="ECO:0007669"/>
    <property type="project" value="UniProtKB-UniRule"/>
</dbReference>
<dbReference type="GO" id="GO:0008360">
    <property type="term" value="P:regulation of cell shape"/>
    <property type="evidence" value="ECO:0007669"/>
    <property type="project" value="UniProtKB-KW"/>
</dbReference>
<dbReference type="FunFam" id="3.30.1490.20:FF:000007">
    <property type="entry name" value="D-alanine--D-alanine ligase"/>
    <property type="match status" value="1"/>
</dbReference>
<dbReference type="FunFam" id="3.30.470.20:FF:000008">
    <property type="entry name" value="D-alanine--D-alanine ligase"/>
    <property type="match status" value="1"/>
</dbReference>
<dbReference type="Gene3D" id="3.40.50.20">
    <property type="match status" value="1"/>
</dbReference>
<dbReference type="Gene3D" id="3.30.1490.20">
    <property type="entry name" value="ATP-grasp fold, A domain"/>
    <property type="match status" value="1"/>
</dbReference>
<dbReference type="Gene3D" id="3.30.470.20">
    <property type="entry name" value="ATP-grasp fold, B domain"/>
    <property type="match status" value="1"/>
</dbReference>
<dbReference type="HAMAP" id="MF_00047">
    <property type="entry name" value="Dala_Dala_lig"/>
    <property type="match status" value="1"/>
</dbReference>
<dbReference type="InterPro" id="IPR011761">
    <property type="entry name" value="ATP-grasp"/>
</dbReference>
<dbReference type="InterPro" id="IPR013815">
    <property type="entry name" value="ATP_grasp_subdomain_1"/>
</dbReference>
<dbReference type="InterPro" id="IPR000291">
    <property type="entry name" value="D-Ala_lig_Van_CS"/>
</dbReference>
<dbReference type="InterPro" id="IPR005905">
    <property type="entry name" value="D_ala_D_ala"/>
</dbReference>
<dbReference type="InterPro" id="IPR011095">
    <property type="entry name" value="Dala_Dala_lig_C"/>
</dbReference>
<dbReference type="InterPro" id="IPR011127">
    <property type="entry name" value="Dala_Dala_lig_N"/>
</dbReference>
<dbReference type="InterPro" id="IPR016185">
    <property type="entry name" value="PreATP-grasp_dom_sf"/>
</dbReference>
<dbReference type="NCBIfam" id="TIGR01205">
    <property type="entry name" value="D_ala_D_alaTIGR"/>
    <property type="match status" value="1"/>
</dbReference>
<dbReference type="NCBIfam" id="NF002378">
    <property type="entry name" value="PRK01372.1"/>
    <property type="match status" value="1"/>
</dbReference>
<dbReference type="NCBIfam" id="NF002528">
    <property type="entry name" value="PRK01966.1-4"/>
    <property type="match status" value="1"/>
</dbReference>
<dbReference type="PANTHER" id="PTHR23132">
    <property type="entry name" value="D-ALANINE--D-ALANINE LIGASE"/>
    <property type="match status" value="1"/>
</dbReference>
<dbReference type="PANTHER" id="PTHR23132:SF25">
    <property type="entry name" value="D-ALANINE--D-ALANINE LIGASE A"/>
    <property type="match status" value="1"/>
</dbReference>
<dbReference type="Pfam" id="PF07478">
    <property type="entry name" value="Dala_Dala_lig_C"/>
    <property type="match status" value="1"/>
</dbReference>
<dbReference type="Pfam" id="PF01820">
    <property type="entry name" value="Dala_Dala_lig_N"/>
    <property type="match status" value="1"/>
</dbReference>
<dbReference type="PIRSF" id="PIRSF039102">
    <property type="entry name" value="Ddl/VanB"/>
    <property type="match status" value="1"/>
</dbReference>
<dbReference type="SUPFAM" id="SSF56059">
    <property type="entry name" value="Glutathione synthetase ATP-binding domain-like"/>
    <property type="match status" value="1"/>
</dbReference>
<dbReference type="SUPFAM" id="SSF52440">
    <property type="entry name" value="PreATP-grasp domain"/>
    <property type="match status" value="1"/>
</dbReference>
<dbReference type="PROSITE" id="PS50975">
    <property type="entry name" value="ATP_GRASP"/>
    <property type="match status" value="1"/>
</dbReference>
<dbReference type="PROSITE" id="PS00843">
    <property type="entry name" value="DALA_DALA_LIGASE_1"/>
    <property type="match status" value="1"/>
</dbReference>
<dbReference type="PROSITE" id="PS00844">
    <property type="entry name" value="DALA_DALA_LIGASE_2"/>
    <property type="match status" value="1"/>
</dbReference>
<reference key="1">
    <citation type="journal article" date="2001" name="J. Bacteriol.">
        <title>Genome sequence and comparative analysis of the solvent-producing bacterium Clostridium acetobutylicum.</title>
        <authorList>
            <person name="Noelling J."/>
            <person name="Breton G."/>
            <person name="Omelchenko M.V."/>
            <person name="Makarova K.S."/>
            <person name="Zeng Q."/>
            <person name="Gibson R."/>
            <person name="Lee H.M."/>
            <person name="Dubois J."/>
            <person name="Qiu D."/>
            <person name="Hitti J."/>
            <person name="Wolf Y.I."/>
            <person name="Tatusov R.L."/>
            <person name="Sabathe F."/>
            <person name="Doucette-Stamm L.A."/>
            <person name="Soucaille P."/>
            <person name="Daly M.J."/>
            <person name="Bennett G.N."/>
            <person name="Koonin E.V."/>
            <person name="Smith D.R."/>
        </authorList>
    </citation>
    <scope>NUCLEOTIDE SEQUENCE [LARGE SCALE GENOMIC DNA]</scope>
    <source>
        <strain>ATCC 824 / DSM 792 / JCM 1419 / IAM 19013 / LMG 5710 / NBRC 13948 / NRRL B-527 / VKM B-1787 / 2291 / W</strain>
    </source>
</reference>
<accession>Q97F58</accession>
<protein>
    <recommendedName>
        <fullName evidence="2">D-alanine--D-alanine ligase</fullName>
        <ecNumber evidence="2">6.3.2.4</ecNumber>
    </recommendedName>
    <alternativeName>
        <fullName evidence="2">D-Ala-D-Ala ligase</fullName>
    </alternativeName>
    <alternativeName>
        <fullName evidence="2">D-alanylalanine synthetase</fullName>
    </alternativeName>
</protein>
<comment type="function">
    <text evidence="2">Cell wall formation.</text>
</comment>
<comment type="catalytic activity">
    <reaction evidence="2">
        <text>2 D-alanine + ATP = D-alanyl-D-alanine + ADP + phosphate + H(+)</text>
        <dbReference type="Rhea" id="RHEA:11224"/>
        <dbReference type="ChEBI" id="CHEBI:15378"/>
        <dbReference type="ChEBI" id="CHEBI:30616"/>
        <dbReference type="ChEBI" id="CHEBI:43474"/>
        <dbReference type="ChEBI" id="CHEBI:57416"/>
        <dbReference type="ChEBI" id="CHEBI:57822"/>
        <dbReference type="ChEBI" id="CHEBI:456216"/>
        <dbReference type="EC" id="6.3.2.4"/>
    </reaction>
</comment>
<comment type="cofactor">
    <cofactor evidence="1">
        <name>Mg(2+)</name>
        <dbReference type="ChEBI" id="CHEBI:18420"/>
    </cofactor>
    <cofactor evidence="1">
        <name>Mn(2+)</name>
        <dbReference type="ChEBI" id="CHEBI:29035"/>
    </cofactor>
    <text evidence="1">Binds 2 magnesium or manganese ions per subunit.</text>
</comment>
<comment type="pathway">
    <text evidence="2">Cell wall biogenesis; peptidoglycan biosynthesis.</text>
</comment>
<comment type="subcellular location">
    <subcellularLocation>
        <location evidence="2">Cytoplasm</location>
    </subcellularLocation>
</comment>
<comment type="similarity">
    <text evidence="2">Belongs to the D-alanine--D-alanine ligase family.</text>
</comment>
<proteinExistence type="inferred from homology"/>